<protein>
    <recommendedName>
        <fullName>Sporulation-specific protein 75</fullName>
    </recommendedName>
</protein>
<sequence length="868" mass="102170">MNATKELTFNLLNKFQDKERFGSAQRHAGISLKGFISGILFSFLYFLFQLSLFIILRSRFKTIYQANVVLKIHPGSKVCFAKKKIKNYWSLFAFLKQLPGRMLDPMEKFERNERYGLDNYLFLRFLKLLIFFFAVLSIINIPILIPIHYFSRDILKENEGERYEQSFRTTSKLDKWTMSNLSPNSSNTLICHLFLSIFVVLWFHFILSSELRFVNRLGYSVLTKSKYQNILYLEGFSSKLVTQSISLETFFQPLHSDCFGVTHFIPKNLKKVHKLEIKLNKLQKSKEQIIFEIILEKYFRRVSIHRHLIANHKRFFFSKLKNHLLFQYKKLVFLTQFRISYYCTKIRLRWKKSSIFPLYYPKLYVNTETILERKYRILDKIIRKEKLIKFQVNSLKATSETKQALPDDLSSGTDIYMDKMFITFKSTLLSNVIGELLSYRLPTQNLKVIIGPNVNDIIWRNILDSSPLWKSAKYFSANILRIFVIIGWILPVAFLGLISQIPNISSLIPFTKIIHFQSPFIREVAKNLIPIVTLIIIIEIVPYFFRWLSYLRGLKTGAQIEADVQNWYFVFVFIHLFVVVTISSGFSIIIERLLNNPVSIPALLANDLPKCANFFCSFVLIRGMAYAGGNLLRIKELLFELFYYKWKRSTPHAQFKRLKTSLFFQLGSIYPIFSVLGCIGIIYSVVAPIILLLCCISFSMVFFSFSYLFKYQYNKENYSETFGKLYIQALMQLYAGIYFMEFCLLGLFTLFDQYTLSTIMLVVFALTVITHSKISKQIKSKPQRIPTLEYLSNLTEERKDQFCQESYTFHDIFSICRNSDEIWLPRDKLGISEEEQSFLEKSYHLKFDLNMYSMNLFGDCHLENSHLH</sequence>
<proteinExistence type="evidence at protein level"/>
<accession>Q07798</accession>
<accession>D6VXZ8</accession>
<keyword id="KW-0106">Calcium</keyword>
<keyword id="KW-0325">Glycoprotein</keyword>
<keyword id="KW-0407">Ion channel</keyword>
<keyword id="KW-0406">Ion transport</keyword>
<keyword id="KW-0472">Membrane</keyword>
<keyword id="KW-1185">Reference proteome</keyword>
<keyword id="KW-0749">Sporulation</keyword>
<keyword id="KW-0812">Transmembrane</keyword>
<keyword id="KW-1133">Transmembrane helix</keyword>
<keyword id="KW-0813">Transport</keyword>
<evidence type="ECO:0000250" key="1"/>
<evidence type="ECO:0000255" key="2"/>
<evidence type="ECO:0000269" key="3">
    <source>
    </source>
</evidence>
<evidence type="ECO:0000269" key="4">
    <source>
    </source>
</evidence>
<evidence type="ECO:0000305" key="5"/>
<dbReference type="EMBL" id="X91488">
    <property type="protein sequence ID" value="CAA62764.1"/>
    <property type="molecule type" value="Genomic_DNA"/>
</dbReference>
<dbReference type="EMBL" id="Z73110">
    <property type="protein sequence ID" value="CAA97448.1"/>
    <property type="molecule type" value="Genomic_DNA"/>
</dbReference>
<dbReference type="EMBL" id="BK006945">
    <property type="protein sequence ID" value="DAA09314.1"/>
    <property type="molecule type" value="Genomic_DNA"/>
</dbReference>
<dbReference type="PIR" id="S64747">
    <property type="entry name" value="S64747"/>
</dbReference>
<dbReference type="RefSeq" id="NP_013096.1">
    <property type="nucleotide sequence ID" value="NM_001181825.1"/>
</dbReference>
<dbReference type="SMR" id="Q07798"/>
<dbReference type="BioGRID" id="31246">
    <property type="interactions" value="90"/>
</dbReference>
<dbReference type="DIP" id="DIP-8843N"/>
<dbReference type="FunCoup" id="Q07798">
    <property type="interactions" value="38"/>
</dbReference>
<dbReference type="IntAct" id="Q07798">
    <property type="interactions" value="3"/>
</dbReference>
<dbReference type="MINT" id="Q07798"/>
<dbReference type="STRING" id="4932.YLL005C"/>
<dbReference type="TCDB" id="1.A.17.5.7">
    <property type="family name" value="the calcium-dependent chloride channel (ca-clc) family"/>
</dbReference>
<dbReference type="GlyCosmos" id="Q07798">
    <property type="glycosylation" value="3 sites, No reported glycans"/>
</dbReference>
<dbReference type="GlyGen" id="Q07798">
    <property type="glycosylation" value="3 sites"/>
</dbReference>
<dbReference type="iPTMnet" id="Q07798"/>
<dbReference type="PaxDb" id="4932-YLL005C"/>
<dbReference type="EnsemblFungi" id="YLL005C_mRNA">
    <property type="protein sequence ID" value="YLL005C"/>
    <property type="gene ID" value="YLL005C"/>
</dbReference>
<dbReference type="GeneID" id="850655"/>
<dbReference type="KEGG" id="sce:YLL005C"/>
<dbReference type="AGR" id="SGD:S000003928"/>
<dbReference type="SGD" id="S000003928">
    <property type="gene designation" value="SPO75"/>
</dbReference>
<dbReference type="VEuPathDB" id="FungiDB:YLL005C"/>
<dbReference type="eggNOG" id="KOG1134">
    <property type="taxonomic scope" value="Eukaryota"/>
</dbReference>
<dbReference type="HOGENOM" id="CLU_002458_2_0_1"/>
<dbReference type="InParanoid" id="Q07798"/>
<dbReference type="OMA" id="PITNEIW"/>
<dbReference type="OrthoDB" id="1076608at2759"/>
<dbReference type="BioCyc" id="YEAST:G3O-32110-MONOMER"/>
<dbReference type="Reactome" id="R-SCE-6798695">
    <property type="pathway name" value="Neutrophil degranulation"/>
</dbReference>
<dbReference type="BioGRID-ORCS" id="850655">
    <property type="hits" value="1 hit in 10 CRISPR screens"/>
</dbReference>
<dbReference type="PRO" id="PR:Q07798"/>
<dbReference type="Proteomes" id="UP000002311">
    <property type="component" value="Chromosome XII"/>
</dbReference>
<dbReference type="RNAct" id="Q07798">
    <property type="molecule type" value="protein"/>
</dbReference>
<dbReference type="GO" id="GO:0016020">
    <property type="term" value="C:membrane"/>
    <property type="evidence" value="ECO:0000255"/>
    <property type="project" value="SGD"/>
</dbReference>
<dbReference type="GO" id="GO:0005886">
    <property type="term" value="C:plasma membrane"/>
    <property type="evidence" value="ECO:0000318"/>
    <property type="project" value="GO_Central"/>
</dbReference>
<dbReference type="GO" id="GO:0005227">
    <property type="term" value="F:calcium-activated cation channel activity"/>
    <property type="evidence" value="ECO:0000318"/>
    <property type="project" value="GO_Central"/>
</dbReference>
<dbReference type="GO" id="GO:0030437">
    <property type="term" value="P:ascospore formation"/>
    <property type="evidence" value="ECO:0000315"/>
    <property type="project" value="SGD"/>
</dbReference>
<dbReference type="GO" id="GO:0030476">
    <property type="term" value="P:ascospore wall assembly"/>
    <property type="evidence" value="ECO:0000315"/>
    <property type="project" value="SGD"/>
</dbReference>
<dbReference type="InterPro" id="IPR045122">
    <property type="entry name" value="Csc1-like"/>
</dbReference>
<dbReference type="InterPro" id="IPR003864">
    <property type="entry name" value="CSC1/OSCA1-like_7TM"/>
</dbReference>
<dbReference type="InterPro" id="IPR032880">
    <property type="entry name" value="Csc1/OSCA1-like_N"/>
</dbReference>
<dbReference type="PANTHER" id="PTHR13018">
    <property type="entry name" value="PROBABLE MEMBRANE PROTEIN DUF221-RELATED"/>
    <property type="match status" value="1"/>
</dbReference>
<dbReference type="PANTHER" id="PTHR13018:SF20">
    <property type="entry name" value="SPORULATION-SPECIFIC PROTEIN 75"/>
    <property type="match status" value="1"/>
</dbReference>
<dbReference type="Pfam" id="PF02714">
    <property type="entry name" value="RSN1_7TM"/>
    <property type="match status" value="1"/>
</dbReference>
<dbReference type="Pfam" id="PF13967">
    <property type="entry name" value="RSN1_TM"/>
    <property type="match status" value="1"/>
</dbReference>
<name>SPO75_YEAST</name>
<gene>
    <name type="primary">SPO75</name>
    <name type="ordered locus">YLL005C</name>
    <name type="ORF">L1361</name>
</gene>
<organism>
    <name type="scientific">Saccharomyces cerevisiae (strain ATCC 204508 / S288c)</name>
    <name type="common">Baker's yeast</name>
    <dbReference type="NCBI Taxonomy" id="559292"/>
    <lineage>
        <taxon>Eukaryota</taxon>
        <taxon>Fungi</taxon>
        <taxon>Dikarya</taxon>
        <taxon>Ascomycota</taxon>
        <taxon>Saccharomycotina</taxon>
        <taxon>Saccharomycetes</taxon>
        <taxon>Saccharomycetales</taxon>
        <taxon>Saccharomycetaceae</taxon>
        <taxon>Saccharomyces</taxon>
    </lineage>
</organism>
<feature type="chain" id="PRO_0000072143" description="Sporulation-specific protein 75">
    <location>
        <begin position="1"/>
        <end position="868"/>
    </location>
</feature>
<feature type="topological domain" description="Extracellular" evidence="2">
    <location>
        <begin position="1"/>
        <end position="34"/>
    </location>
</feature>
<feature type="transmembrane region" description="Helical" evidence="2">
    <location>
        <begin position="35"/>
        <end position="55"/>
    </location>
</feature>
<feature type="topological domain" description="Cytoplasmic" evidence="2">
    <location>
        <begin position="56"/>
        <end position="127"/>
    </location>
</feature>
<feature type="transmembrane region" description="Helical" evidence="2">
    <location>
        <begin position="128"/>
        <end position="148"/>
    </location>
</feature>
<feature type="topological domain" description="Extracellular" evidence="2">
    <location>
        <begin position="149"/>
        <end position="187"/>
    </location>
</feature>
<feature type="transmembrane region" description="Helical" evidence="2">
    <location>
        <begin position="188"/>
        <end position="208"/>
    </location>
</feature>
<feature type="topological domain" description="Cytoplasmic" evidence="2">
    <location>
        <begin position="209"/>
        <end position="481"/>
    </location>
</feature>
<feature type="transmembrane region" description="Helical" evidence="2">
    <location>
        <begin position="482"/>
        <end position="502"/>
    </location>
</feature>
<feature type="topological domain" description="Extracellular" evidence="2">
    <location>
        <begin position="503"/>
        <end position="527"/>
    </location>
</feature>
<feature type="transmembrane region" description="Helical" evidence="2">
    <location>
        <begin position="528"/>
        <end position="548"/>
    </location>
</feature>
<feature type="topological domain" description="Cytoplasmic" evidence="2">
    <location>
        <begin position="549"/>
        <end position="569"/>
    </location>
</feature>
<feature type="transmembrane region" description="Helical" evidence="2">
    <location>
        <begin position="570"/>
        <end position="590"/>
    </location>
</feature>
<feature type="topological domain" description="Extracellular" evidence="2">
    <location>
        <begin position="591"/>
        <end position="611"/>
    </location>
</feature>
<feature type="transmembrane region" description="Helical" evidence="2">
    <location>
        <begin position="612"/>
        <end position="632"/>
    </location>
</feature>
<feature type="topological domain" description="Cytoplasmic" evidence="2">
    <location>
        <begin position="633"/>
        <end position="660"/>
    </location>
</feature>
<feature type="transmembrane region" description="Helical" evidence="2">
    <location>
        <begin position="661"/>
        <end position="683"/>
    </location>
</feature>
<feature type="topological domain" description="Extracellular" evidence="2">
    <location>
        <begin position="684"/>
        <end position="692"/>
    </location>
</feature>
<feature type="transmembrane region" description="Helical" evidence="2">
    <location>
        <begin position="693"/>
        <end position="713"/>
    </location>
</feature>
<feature type="topological domain" description="Cytoplasmic" evidence="2">
    <location>
        <begin position="714"/>
        <end position="730"/>
    </location>
</feature>
<feature type="transmembrane region" description="Helical" evidence="2">
    <location>
        <begin position="731"/>
        <end position="751"/>
    </location>
</feature>
<feature type="topological domain" description="Extracellular" evidence="2">
    <location>
        <begin position="752"/>
        <end position="753"/>
    </location>
</feature>
<feature type="transmembrane region" description="Helical" evidence="2">
    <location>
        <begin position="754"/>
        <end position="774"/>
    </location>
</feature>
<feature type="topological domain" description="Cytoplasmic" evidence="2">
    <location>
        <begin position="775"/>
        <end position="868"/>
    </location>
</feature>
<feature type="glycosylation site" description="N-linked (GlcNAc...) asparagine" evidence="2">
    <location>
        <position position="2"/>
    </location>
</feature>
<feature type="glycosylation site" description="N-linked (GlcNAc...) asparagine" evidence="2">
    <location>
        <position position="184"/>
    </location>
</feature>
<feature type="glycosylation site" description="N-linked (GlcNAc...) asparagine" evidence="2">
    <location>
        <position position="503"/>
    </location>
</feature>
<comment type="function">
    <text evidence="1 3 4">Acts as an osmosensitive calcium-permeable cation channel (By similarity). Required for spore wall assembly and ascus formation.</text>
</comment>
<comment type="subcellular location">
    <subcellularLocation>
        <location>Membrane</location>
        <topology>Multi-pass membrane protein</topology>
    </subcellularLocation>
</comment>
<comment type="similarity">
    <text evidence="5">Belongs to the CSC1 (TC 1.A.17) family.</text>
</comment>
<reference key="1">
    <citation type="journal article" date="1996" name="Yeast">
        <title>Sequence analysis of the CEN12 region of Saccharomyces cerevisiae on a 43.7 kb fragment of chromosome XII including an open reading frame homologous to the human cystic fibrosis transmembrane conductance regulator protein CFTR.</title>
        <authorList>
            <person name="Miosga T."/>
            <person name="Zimmermann F.K."/>
        </authorList>
    </citation>
    <scope>NUCLEOTIDE SEQUENCE [LARGE SCALE GENOMIC DNA]</scope>
</reference>
<reference key="2">
    <citation type="journal article" date="2014" name="G3 (Bethesda)">
        <title>The reference genome sequence of Saccharomyces cerevisiae: Then and now.</title>
        <authorList>
            <person name="Engel S.R."/>
            <person name="Dietrich F.S."/>
            <person name="Fisk D.G."/>
            <person name="Binkley G."/>
            <person name="Balakrishnan R."/>
            <person name="Costanzo M.C."/>
            <person name="Dwight S.S."/>
            <person name="Hitz B.C."/>
            <person name="Karra K."/>
            <person name="Nash R.S."/>
            <person name="Weng S."/>
            <person name="Wong E.D."/>
            <person name="Lloyd P."/>
            <person name="Skrzypek M.S."/>
            <person name="Miyasato S.R."/>
            <person name="Simison M."/>
            <person name="Cherry J.M."/>
        </authorList>
    </citation>
    <scope>GENOME REANNOTATION</scope>
    <source>
        <strain>ATCC 204508 / S288c</strain>
    </source>
</reference>
<reference key="3">
    <citation type="journal article" date="1997" name="Nature">
        <title>The nucleotide sequence of Saccharomyces cerevisiae chromosome XII.</title>
        <authorList>
            <person name="Johnston M."/>
            <person name="Hillier L.W."/>
            <person name="Riles L."/>
            <person name="Albermann K."/>
            <person name="Andre B."/>
            <person name="Ansorge W."/>
            <person name="Benes V."/>
            <person name="Brueckner M."/>
            <person name="Delius H."/>
            <person name="Dubois E."/>
            <person name="Duesterhoeft A."/>
            <person name="Entian K.-D."/>
            <person name="Floeth M."/>
            <person name="Goffeau A."/>
            <person name="Hebling U."/>
            <person name="Heumann K."/>
            <person name="Heuss-Neitzel D."/>
            <person name="Hilbert H."/>
            <person name="Hilger F."/>
            <person name="Kleine K."/>
            <person name="Koetter P."/>
            <person name="Louis E.J."/>
            <person name="Messenguy F."/>
            <person name="Mewes H.-W."/>
            <person name="Miosga T."/>
            <person name="Moestl D."/>
            <person name="Mueller-Auer S."/>
            <person name="Nentwich U."/>
            <person name="Obermaier B."/>
            <person name="Piravandi E."/>
            <person name="Pohl T.M."/>
            <person name="Portetelle D."/>
            <person name="Purnelle B."/>
            <person name="Rechmann S."/>
            <person name="Rieger M."/>
            <person name="Rinke M."/>
            <person name="Rose M."/>
            <person name="Scharfe M."/>
            <person name="Scherens B."/>
            <person name="Scholler P."/>
            <person name="Schwager C."/>
            <person name="Schwarz S."/>
            <person name="Underwood A.P."/>
            <person name="Urrestarazu L.A."/>
            <person name="Vandenbol M."/>
            <person name="Verhasselt P."/>
            <person name="Vierendeels F."/>
            <person name="Voet M."/>
            <person name="Volckaert G."/>
            <person name="Voss H."/>
            <person name="Wambutt R."/>
            <person name="Wedler E."/>
            <person name="Wedler H."/>
            <person name="Zimmermann F.K."/>
            <person name="Zollner A."/>
            <person name="Hani J."/>
            <person name="Hoheisel J.D."/>
        </authorList>
    </citation>
    <scope>NUCLEOTIDE SEQUENCE [LARGE SCALE GENOMIC DNA]</scope>
    <source>
        <strain>ATCC 204508 / S288c</strain>
    </source>
</reference>
<reference key="4">
    <citation type="journal article" date="2001" name="Curr. Biol.">
        <title>A screen for genes required for meiosis and spore formation based on whole-genome expression.</title>
        <authorList>
            <person name="Rabitsch K.P."/>
            <person name="Toth A."/>
            <person name="Galova M."/>
            <person name="Schleiffer A."/>
            <person name="Schaffner G."/>
            <person name="Aigner E."/>
            <person name="Rupp C."/>
            <person name="Penkner A.M."/>
            <person name="Moreno-Borchart A.C."/>
            <person name="Primig M."/>
            <person name="Esposito R.E."/>
            <person name="Klein F."/>
            <person name="Knop M."/>
            <person name="Nasmyth K."/>
        </authorList>
    </citation>
    <scope>FUNCTION</scope>
</reference>
<reference key="5">
    <citation type="journal article" date="2004" name="Eukaryot. Cell">
        <title>Morphogenetic pathway of spore wall assembly in Saccharomyces cerevisiae.</title>
        <authorList>
            <person name="Coluccio A."/>
            <person name="Bogengruber E."/>
            <person name="Conrad M.N."/>
            <person name="Dresser M.E."/>
            <person name="Briza P."/>
            <person name="Neiman A.M."/>
        </authorList>
    </citation>
    <scope>FUNCTION</scope>
</reference>
<reference key="6">
    <citation type="journal article" date="2006" name="Proc. Natl. Acad. Sci. U.S.A.">
        <title>A global topology map of the Saccharomyces cerevisiae membrane proteome.</title>
        <authorList>
            <person name="Kim H."/>
            <person name="Melen K."/>
            <person name="Oesterberg M."/>
            <person name="von Heijne G."/>
        </authorList>
    </citation>
    <scope>TOPOLOGY [LARGE SCALE ANALYSIS]</scope>
    <source>
        <strain>ATCC 208353 / W303-1A</strain>
    </source>
</reference>